<sequence>MAYLIDIPFEYFSSFLGVHPDQLKLLFCFLSAYPFAGILKRLPSAPWIRNLFSISIGLFYLIGVHHLYDGVLVLLFDALFTYFVAAFYRSSRMPWIIFIVILGHTFSSHVIRYIYPSENTDITASQMVLCMKLTAFAWSVYDGRLPSSELSSYQKDRALRKIPNILYFLGYVFFFPSLLVGPAFDYVDYERFITLSMFKPLADPYEKQITPHSLEPALGRCWRGLLWLILFITGSSIYPLKFLLTPKFASSPILLKYGYVCITAFVARMKYYGAWELSDGACILSGIGYNGLDSSKHPRWDRVKNIDPIKFEFADNIKCALEAWNMNTNKWLRNYVYLRVAKKGKRPGFKSTLSTFTVSAMWHGVSAGYYLTFVSAAFIQTVAKYTRRHVRPFFLKPDMETPGPFKRVYDVIGMVATNLSLSYLIISFLLLNLKESIHVWKELYFIVHIYILIALAVFNSPIRSKLDNKIRSRVNSYKLKSYEQSMKSTSDTDMLNMSVPKREDFENDE</sequence>
<dbReference type="EC" id="2.3.1.23"/>
<dbReference type="EC" id="2.3.1.51"/>
<dbReference type="EMBL" id="AB305042">
    <property type="protein sequence ID" value="BAF93898.1"/>
    <property type="molecule type" value="mRNA"/>
</dbReference>
<dbReference type="EMBL" id="CU329671">
    <property type="protein sequence ID" value="CAA16861.1"/>
    <property type="molecule type" value="Genomic_DNA"/>
</dbReference>
<dbReference type="PIR" id="T39542">
    <property type="entry name" value="T39542"/>
</dbReference>
<dbReference type="RefSeq" id="NP_596779.1">
    <property type="nucleotide sequence ID" value="NM_001023800.2"/>
</dbReference>
<dbReference type="SMR" id="O42916"/>
<dbReference type="BioGRID" id="276484">
    <property type="interactions" value="14"/>
</dbReference>
<dbReference type="FunCoup" id="O42916">
    <property type="interactions" value="190"/>
</dbReference>
<dbReference type="STRING" id="284812.O42916"/>
<dbReference type="iPTMnet" id="O42916"/>
<dbReference type="PaxDb" id="4896-SPBC16A3.10.1"/>
<dbReference type="EnsemblFungi" id="SPBC16A3.10.1">
    <property type="protein sequence ID" value="SPBC16A3.10.1:pep"/>
    <property type="gene ID" value="SPBC16A3.10"/>
</dbReference>
<dbReference type="GeneID" id="2539940"/>
<dbReference type="KEGG" id="spo:2539940"/>
<dbReference type="PomBase" id="SPBC16A3.10">
    <property type="gene designation" value="ale1"/>
</dbReference>
<dbReference type="VEuPathDB" id="FungiDB:SPBC16A3.10"/>
<dbReference type="eggNOG" id="KOG2704">
    <property type="taxonomic scope" value="Eukaryota"/>
</dbReference>
<dbReference type="HOGENOM" id="CLU_011340_5_0_1"/>
<dbReference type="InParanoid" id="O42916"/>
<dbReference type="OMA" id="WHGTRPG"/>
<dbReference type="PhylomeDB" id="O42916"/>
<dbReference type="Reactome" id="R-SPO-1482788">
    <property type="pathway name" value="Acyl chain remodelling of PC"/>
</dbReference>
<dbReference type="Reactome" id="R-SPO-1482801">
    <property type="pathway name" value="Acyl chain remodelling of PS"/>
</dbReference>
<dbReference type="Reactome" id="R-SPO-1482839">
    <property type="pathway name" value="Acyl chain remodelling of PE"/>
</dbReference>
<dbReference type="Reactome" id="R-SPO-1482922">
    <property type="pathway name" value="Acyl chain remodelling of PI"/>
</dbReference>
<dbReference type="PRO" id="PR:O42916"/>
<dbReference type="Proteomes" id="UP000002485">
    <property type="component" value="Chromosome II"/>
</dbReference>
<dbReference type="GO" id="GO:0005783">
    <property type="term" value="C:endoplasmic reticulum"/>
    <property type="evidence" value="ECO:0007005"/>
    <property type="project" value="PomBase"/>
</dbReference>
<dbReference type="GO" id="GO:0005789">
    <property type="term" value="C:endoplasmic reticulum membrane"/>
    <property type="evidence" value="ECO:0000305"/>
    <property type="project" value="PomBase"/>
</dbReference>
<dbReference type="GO" id="GO:0016020">
    <property type="term" value="C:membrane"/>
    <property type="evidence" value="ECO:0000318"/>
    <property type="project" value="GO_Central"/>
</dbReference>
<dbReference type="GO" id="GO:0003841">
    <property type="term" value="F:1-acylglycerol-3-phosphate O-acyltransferase activity"/>
    <property type="evidence" value="ECO:0000318"/>
    <property type="project" value="GO_Central"/>
</dbReference>
<dbReference type="GO" id="GO:0047184">
    <property type="term" value="F:1-acylglycerophosphocholine O-acyltransferase activity"/>
    <property type="evidence" value="ECO:0000318"/>
    <property type="project" value="GO_Central"/>
</dbReference>
<dbReference type="GO" id="GO:0106262">
    <property type="term" value="F:1-acylglycerophosphoethanolamine O-acyltransferase activity"/>
    <property type="evidence" value="ECO:0007669"/>
    <property type="project" value="RHEA"/>
</dbReference>
<dbReference type="GO" id="GO:0046474">
    <property type="term" value="P:glycerophospholipid biosynthetic process"/>
    <property type="evidence" value="ECO:0000318"/>
    <property type="project" value="GO_Central"/>
</dbReference>
<dbReference type="GO" id="GO:0030258">
    <property type="term" value="P:lipid modification"/>
    <property type="evidence" value="ECO:0000318"/>
    <property type="project" value="GO_Central"/>
</dbReference>
<dbReference type="GO" id="GO:0006646">
    <property type="term" value="P:phosphatidylethanolamine biosynthetic process"/>
    <property type="evidence" value="ECO:0000305"/>
    <property type="project" value="PomBase"/>
</dbReference>
<dbReference type="InterPro" id="IPR049941">
    <property type="entry name" value="LPLAT_7/PORCN-like"/>
</dbReference>
<dbReference type="InterPro" id="IPR004299">
    <property type="entry name" value="MBOAT_fam"/>
</dbReference>
<dbReference type="PANTHER" id="PTHR13906:SF4">
    <property type="entry name" value="LYSOPHOSPHOLIPID ACYLTRANSFERASE 6"/>
    <property type="match status" value="1"/>
</dbReference>
<dbReference type="PANTHER" id="PTHR13906">
    <property type="entry name" value="PORCUPINE"/>
    <property type="match status" value="1"/>
</dbReference>
<dbReference type="Pfam" id="PF03062">
    <property type="entry name" value="MBOAT"/>
    <property type="match status" value="1"/>
</dbReference>
<feature type="chain" id="PRO_0000315633" description="Lysophospholipid acyltransferase">
    <location>
        <begin position="1"/>
        <end position="509"/>
    </location>
</feature>
<feature type="topological domain" description="Lumenal" evidence="1">
    <location>
        <begin position="1"/>
        <end position="14"/>
    </location>
</feature>
<feature type="transmembrane region" description="Helical" evidence="2">
    <location>
        <begin position="15"/>
        <end position="35"/>
    </location>
</feature>
<feature type="topological domain" description="Cytoplasmic" evidence="1">
    <location>
        <begin position="36"/>
        <end position="55"/>
    </location>
</feature>
<feature type="transmembrane region" description="Helical" evidence="2">
    <location>
        <begin position="56"/>
        <end position="76"/>
    </location>
</feature>
<feature type="topological domain" description="Lumenal" evidence="1">
    <location>
        <begin position="77"/>
        <end position="94"/>
    </location>
</feature>
<feature type="transmembrane region" description="Helical" evidence="2">
    <location>
        <begin position="95"/>
        <end position="115"/>
    </location>
</feature>
<feature type="topological domain" description="Cytoplasmic" evidence="1">
    <location>
        <begin position="116"/>
        <end position="223"/>
    </location>
</feature>
<feature type="transmembrane region" description="Helical" evidence="2">
    <location>
        <begin position="224"/>
        <end position="244"/>
    </location>
</feature>
<feature type="topological domain" description="Lumenal" evidence="1">
    <location>
        <begin position="245"/>
        <end position="246"/>
    </location>
</feature>
<feature type="transmembrane region" description="Helical" evidence="2">
    <location>
        <begin position="247"/>
        <end position="267"/>
    </location>
</feature>
<feature type="topological domain" description="Cytoplasmic" evidence="1">
    <location>
        <begin position="268"/>
        <end position="410"/>
    </location>
</feature>
<feature type="transmembrane region" description="Helical" evidence="2">
    <location>
        <begin position="411"/>
        <end position="431"/>
    </location>
</feature>
<feature type="topological domain" description="Lumenal" evidence="1">
    <location>
        <begin position="432"/>
        <end position="441"/>
    </location>
</feature>
<feature type="transmembrane region" description="Helical" evidence="2">
    <location>
        <begin position="442"/>
        <end position="462"/>
    </location>
</feature>
<feature type="topological domain" description="Cytoplasmic" evidence="1">
    <location>
        <begin position="463"/>
        <end position="509"/>
    </location>
</feature>
<feature type="region of interest" description="Disordered" evidence="3">
    <location>
        <begin position="488"/>
        <end position="509"/>
    </location>
</feature>
<feature type="compositionally biased region" description="Basic and acidic residues" evidence="3">
    <location>
        <begin position="500"/>
        <end position="509"/>
    </location>
</feature>
<feature type="active site" evidence="1">
    <location>
        <position position="363"/>
    </location>
</feature>
<feature type="modified residue" description="Phosphoserine" evidence="5">
    <location>
        <position position="490"/>
    </location>
</feature>
<reference key="1">
    <citation type="journal article" date="2007" name="J. Biol. Chem.">
        <title>LPT1 encodes a membrane-bound O-acyltransferase involved in the acylation of lysophospholipids in the yeast Saccharomyces cerevisiae.</title>
        <authorList>
            <person name="Tamaki H."/>
            <person name="Shimada A."/>
            <person name="Itoh Y."/>
            <person name="Ohya M."/>
            <person name="Takase J."/>
            <person name="Miyashita M."/>
            <person name="Miyagawa H."/>
            <person name="Nozaki H."/>
            <person name="Nakayama R."/>
            <person name="Kumagai H."/>
        </authorList>
    </citation>
    <scope>NUCLEOTIDE SEQUENCE [MRNA]</scope>
    <scope>SUBCELLULAR LOCATION</scope>
    <scope>FUNCTION</scope>
</reference>
<reference key="2">
    <citation type="journal article" date="2002" name="Nature">
        <title>The genome sequence of Schizosaccharomyces pombe.</title>
        <authorList>
            <person name="Wood V."/>
            <person name="Gwilliam R."/>
            <person name="Rajandream M.A."/>
            <person name="Lyne M.H."/>
            <person name="Lyne R."/>
            <person name="Stewart A."/>
            <person name="Sgouros J.G."/>
            <person name="Peat N."/>
            <person name="Hayles J."/>
            <person name="Baker S.G."/>
            <person name="Basham D."/>
            <person name="Bowman S."/>
            <person name="Brooks K."/>
            <person name="Brown D."/>
            <person name="Brown S."/>
            <person name="Chillingworth T."/>
            <person name="Churcher C.M."/>
            <person name="Collins M."/>
            <person name="Connor R."/>
            <person name="Cronin A."/>
            <person name="Davis P."/>
            <person name="Feltwell T."/>
            <person name="Fraser A."/>
            <person name="Gentles S."/>
            <person name="Goble A."/>
            <person name="Hamlin N."/>
            <person name="Harris D.E."/>
            <person name="Hidalgo J."/>
            <person name="Hodgson G."/>
            <person name="Holroyd S."/>
            <person name="Hornsby T."/>
            <person name="Howarth S."/>
            <person name="Huckle E.J."/>
            <person name="Hunt S."/>
            <person name="Jagels K."/>
            <person name="James K.D."/>
            <person name="Jones L."/>
            <person name="Jones M."/>
            <person name="Leather S."/>
            <person name="McDonald S."/>
            <person name="McLean J."/>
            <person name="Mooney P."/>
            <person name="Moule S."/>
            <person name="Mungall K.L."/>
            <person name="Murphy L.D."/>
            <person name="Niblett D."/>
            <person name="Odell C."/>
            <person name="Oliver K."/>
            <person name="O'Neil S."/>
            <person name="Pearson D."/>
            <person name="Quail M.A."/>
            <person name="Rabbinowitsch E."/>
            <person name="Rutherford K.M."/>
            <person name="Rutter S."/>
            <person name="Saunders D."/>
            <person name="Seeger K."/>
            <person name="Sharp S."/>
            <person name="Skelton J."/>
            <person name="Simmonds M.N."/>
            <person name="Squares R."/>
            <person name="Squares S."/>
            <person name="Stevens K."/>
            <person name="Taylor K."/>
            <person name="Taylor R.G."/>
            <person name="Tivey A."/>
            <person name="Walsh S.V."/>
            <person name="Warren T."/>
            <person name="Whitehead S."/>
            <person name="Woodward J.R."/>
            <person name="Volckaert G."/>
            <person name="Aert R."/>
            <person name="Robben J."/>
            <person name="Grymonprez B."/>
            <person name="Weltjens I."/>
            <person name="Vanstreels E."/>
            <person name="Rieger M."/>
            <person name="Schaefer M."/>
            <person name="Mueller-Auer S."/>
            <person name="Gabel C."/>
            <person name="Fuchs M."/>
            <person name="Duesterhoeft A."/>
            <person name="Fritzc C."/>
            <person name="Holzer E."/>
            <person name="Moestl D."/>
            <person name="Hilbert H."/>
            <person name="Borzym K."/>
            <person name="Langer I."/>
            <person name="Beck A."/>
            <person name="Lehrach H."/>
            <person name="Reinhardt R."/>
            <person name="Pohl T.M."/>
            <person name="Eger P."/>
            <person name="Zimmermann W."/>
            <person name="Wedler H."/>
            <person name="Wambutt R."/>
            <person name="Purnelle B."/>
            <person name="Goffeau A."/>
            <person name="Cadieu E."/>
            <person name="Dreano S."/>
            <person name="Gloux S."/>
            <person name="Lelaure V."/>
            <person name="Mottier S."/>
            <person name="Galibert F."/>
            <person name="Aves S.J."/>
            <person name="Xiang Z."/>
            <person name="Hunt C."/>
            <person name="Moore K."/>
            <person name="Hurst S.M."/>
            <person name="Lucas M."/>
            <person name="Rochet M."/>
            <person name="Gaillardin C."/>
            <person name="Tallada V.A."/>
            <person name="Garzon A."/>
            <person name="Thode G."/>
            <person name="Daga R.R."/>
            <person name="Cruzado L."/>
            <person name="Jimenez J."/>
            <person name="Sanchez M."/>
            <person name="del Rey F."/>
            <person name="Benito J."/>
            <person name="Dominguez A."/>
            <person name="Revuelta J.L."/>
            <person name="Moreno S."/>
            <person name="Armstrong J."/>
            <person name="Forsburg S.L."/>
            <person name="Cerutti L."/>
            <person name="Lowe T."/>
            <person name="McCombie W.R."/>
            <person name="Paulsen I."/>
            <person name="Potashkin J."/>
            <person name="Shpakovski G.V."/>
            <person name="Ussery D."/>
            <person name="Barrell B.G."/>
            <person name="Nurse P."/>
        </authorList>
    </citation>
    <scope>NUCLEOTIDE SEQUENCE [LARGE SCALE GENOMIC DNA]</scope>
    <source>
        <strain>972 / ATCC 24843</strain>
    </source>
</reference>
<reference key="3">
    <citation type="journal article" date="2006" name="Nat. Biotechnol.">
        <title>ORFeome cloning and global analysis of protein localization in the fission yeast Schizosaccharomyces pombe.</title>
        <authorList>
            <person name="Matsuyama A."/>
            <person name="Arai R."/>
            <person name="Yashiroda Y."/>
            <person name="Shirai A."/>
            <person name="Kamata A."/>
            <person name="Sekido S."/>
            <person name="Kobayashi Y."/>
            <person name="Hashimoto A."/>
            <person name="Hamamoto M."/>
            <person name="Hiraoka Y."/>
            <person name="Horinouchi S."/>
            <person name="Yoshida M."/>
        </authorList>
    </citation>
    <scope>SUBCELLULAR LOCATION [LARGE SCALE ANALYSIS]</scope>
</reference>
<reference key="4">
    <citation type="journal article" date="2008" name="J. Proteome Res.">
        <title>Phosphoproteome analysis of fission yeast.</title>
        <authorList>
            <person name="Wilson-Grady J.T."/>
            <person name="Villen J."/>
            <person name="Gygi S.P."/>
        </authorList>
    </citation>
    <scope>PHOSPHORYLATION [LARGE SCALE ANALYSIS] AT SER-490</scope>
    <scope>IDENTIFICATION BY MASS SPECTROMETRY</scope>
</reference>
<protein>
    <recommendedName>
        <fullName>Lysophospholipid acyltransferase</fullName>
        <shortName>LPLAT</shortName>
        <ecNumber>2.3.1.23</ecNumber>
        <ecNumber>2.3.1.51</ecNumber>
    </recommendedName>
    <alternativeName>
        <fullName>1-acyl-sn-glycerol-3-phosphate acyltransferase</fullName>
        <shortName>AGPAT</shortName>
    </alternativeName>
    <alternativeName>
        <fullName>Lysophosphatidic acid acyltransferase</fullName>
        <shortName>LPAAT</shortName>
    </alternativeName>
    <alternativeName>
        <fullName>Lysophosphatidylcholine acyltransferase</fullName>
        <shortName>LPCAT</shortName>
    </alternativeName>
    <alternativeName>
        <fullName>Lysophosphatidylethanolamine acyltransferase</fullName>
        <shortName>LPEAT</shortName>
    </alternativeName>
</protein>
<name>ALE1_SCHPO</name>
<keyword id="KW-0012">Acyltransferase</keyword>
<keyword id="KW-0256">Endoplasmic reticulum</keyword>
<keyword id="KW-0444">Lipid biosynthesis</keyword>
<keyword id="KW-0443">Lipid metabolism</keyword>
<keyword id="KW-0472">Membrane</keyword>
<keyword id="KW-0492">Microsome</keyword>
<keyword id="KW-0594">Phospholipid biosynthesis</keyword>
<keyword id="KW-1208">Phospholipid metabolism</keyword>
<keyword id="KW-0597">Phosphoprotein</keyword>
<keyword id="KW-1185">Reference proteome</keyword>
<keyword id="KW-0808">Transferase</keyword>
<keyword id="KW-0812">Transmembrane</keyword>
<keyword id="KW-1133">Transmembrane helix</keyword>
<organism>
    <name type="scientific">Schizosaccharomyces pombe (strain 972 / ATCC 24843)</name>
    <name type="common">Fission yeast</name>
    <dbReference type="NCBI Taxonomy" id="284812"/>
    <lineage>
        <taxon>Eukaryota</taxon>
        <taxon>Fungi</taxon>
        <taxon>Dikarya</taxon>
        <taxon>Ascomycota</taxon>
        <taxon>Taphrinomycotina</taxon>
        <taxon>Schizosaccharomycetes</taxon>
        <taxon>Schizosaccharomycetales</taxon>
        <taxon>Schizosaccharomycetaceae</taxon>
        <taxon>Schizosaccharomyces</taxon>
    </lineage>
</organism>
<evidence type="ECO:0000250" key="1"/>
<evidence type="ECO:0000255" key="2"/>
<evidence type="ECO:0000256" key="3">
    <source>
        <dbReference type="SAM" id="MobiDB-lite"/>
    </source>
</evidence>
<evidence type="ECO:0000269" key="4">
    <source>
    </source>
</evidence>
<evidence type="ECO:0000269" key="5">
    <source>
    </source>
</evidence>
<evidence type="ECO:0000305" key="6"/>
<comment type="function">
    <text evidence="4">Membrane-bound O-acyltransferase that mediates the incorporation of unsaturated acyl chains into the sn-2 position of phospholipids.</text>
</comment>
<comment type="catalytic activity">
    <reaction>
        <text>a 1-acyl-sn-glycero-3-phosphate + an acyl-CoA = a 1,2-diacyl-sn-glycero-3-phosphate + CoA</text>
        <dbReference type="Rhea" id="RHEA:19709"/>
        <dbReference type="ChEBI" id="CHEBI:57287"/>
        <dbReference type="ChEBI" id="CHEBI:57970"/>
        <dbReference type="ChEBI" id="CHEBI:58342"/>
        <dbReference type="ChEBI" id="CHEBI:58608"/>
        <dbReference type="EC" id="2.3.1.51"/>
    </reaction>
</comment>
<comment type="catalytic activity">
    <reaction>
        <text>a 1-acyl-sn-glycero-3-phosphocholine + an acyl-CoA = a 1,2-diacyl-sn-glycero-3-phosphocholine + CoA</text>
        <dbReference type="Rhea" id="RHEA:12937"/>
        <dbReference type="ChEBI" id="CHEBI:57287"/>
        <dbReference type="ChEBI" id="CHEBI:57643"/>
        <dbReference type="ChEBI" id="CHEBI:58168"/>
        <dbReference type="ChEBI" id="CHEBI:58342"/>
        <dbReference type="EC" id="2.3.1.23"/>
    </reaction>
</comment>
<comment type="catalytic activity">
    <reaction>
        <text>a 1-acyl-sn-glycero-3-phosphoethanolamine + an acyl-CoA = a 1,2-diacyl-sn-glycero-3-phosphoethanolamine + CoA</text>
        <dbReference type="Rhea" id="RHEA:32995"/>
        <dbReference type="ChEBI" id="CHEBI:57287"/>
        <dbReference type="ChEBI" id="CHEBI:58342"/>
        <dbReference type="ChEBI" id="CHEBI:64381"/>
        <dbReference type="ChEBI" id="CHEBI:64612"/>
    </reaction>
</comment>
<comment type="subcellular location">
    <subcellularLocation>
        <location>Endoplasmic reticulum membrane</location>
        <topology>Multi-pass membrane protein</topology>
    </subcellularLocation>
    <subcellularLocation>
        <location evidence="1">Microsome membrane</location>
        <topology evidence="1">Multi-pass membrane protein</topology>
    </subcellularLocation>
</comment>
<comment type="similarity">
    <text evidence="6">Belongs to the membrane-bound acyltransferase family.</text>
</comment>
<proteinExistence type="evidence at protein level"/>
<gene>
    <name type="primary">ale1</name>
    <name type="synonym">lpt1</name>
    <name type="ORF">SPBC16A3.10</name>
</gene>
<accession>O42916</accession>
<accession>A9EDQ0</accession>